<evidence type="ECO:0000255" key="1"/>
<evidence type="ECO:0000269" key="2">
    <source>
    </source>
</evidence>
<evidence type="ECO:0000303" key="3">
    <source>
    </source>
</evidence>
<evidence type="ECO:0000305" key="4"/>
<evidence type="ECO:0000312" key="5">
    <source>
        <dbReference type="EMBL" id="AAK58889.1"/>
    </source>
</evidence>
<evidence type="ECO:0000312" key="6">
    <source>
        <dbReference type="EMBL" id="AAK64520.1"/>
    </source>
</evidence>
<evidence type="ECO:0000312" key="7">
    <source>
        <dbReference type="EMBL" id="AAN11059.2"/>
    </source>
</evidence>
<evidence type="ECO:0000312" key="8">
    <source>
        <dbReference type="FlyBase" id="FBgn0053117"/>
    </source>
</evidence>
<keyword id="KW-0391">Immunity</keyword>
<keyword id="KW-0399">Innate immunity</keyword>
<keyword id="KW-1185">Reference proteome</keyword>
<keyword id="KW-0964">Secreted</keyword>
<keyword id="KW-0732">Signal</keyword>
<reference evidence="7" key="1">
    <citation type="journal article" date="2000" name="Science">
        <title>The genome sequence of Drosophila melanogaster.</title>
        <authorList>
            <person name="Adams M.D."/>
            <person name="Celniker S.E."/>
            <person name="Holt R.A."/>
            <person name="Evans C.A."/>
            <person name="Gocayne J.D."/>
            <person name="Amanatides P.G."/>
            <person name="Scherer S.E."/>
            <person name="Li P.W."/>
            <person name="Hoskins R.A."/>
            <person name="Galle R.F."/>
            <person name="George R.A."/>
            <person name="Lewis S.E."/>
            <person name="Richards S."/>
            <person name="Ashburner M."/>
            <person name="Henderson S.N."/>
            <person name="Sutton G.G."/>
            <person name="Wortman J.R."/>
            <person name="Yandell M.D."/>
            <person name="Zhang Q."/>
            <person name="Chen L.X."/>
            <person name="Brandon R.C."/>
            <person name="Rogers Y.-H.C."/>
            <person name="Blazej R.G."/>
            <person name="Champe M."/>
            <person name="Pfeiffer B.D."/>
            <person name="Wan K.H."/>
            <person name="Doyle C."/>
            <person name="Baxter E.G."/>
            <person name="Helt G."/>
            <person name="Nelson C.R."/>
            <person name="Miklos G.L.G."/>
            <person name="Abril J.F."/>
            <person name="Agbayani A."/>
            <person name="An H.-J."/>
            <person name="Andrews-Pfannkoch C."/>
            <person name="Baldwin D."/>
            <person name="Ballew R.M."/>
            <person name="Basu A."/>
            <person name="Baxendale J."/>
            <person name="Bayraktaroglu L."/>
            <person name="Beasley E.M."/>
            <person name="Beeson K.Y."/>
            <person name="Benos P.V."/>
            <person name="Berman B.P."/>
            <person name="Bhandari D."/>
            <person name="Bolshakov S."/>
            <person name="Borkova D."/>
            <person name="Botchan M.R."/>
            <person name="Bouck J."/>
            <person name="Brokstein P."/>
            <person name="Brottier P."/>
            <person name="Burtis K.C."/>
            <person name="Busam D.A."/>
            <person name="Butler H."/>
            <person name="Cadieu E."/>
            <person name="Center A."/>
            <person name="Chandra I."/>
            <person name="Cherry J.M."/>
            <person name="Cawley S."/>
            <person name="Dahlke C."/>
            <person name="Davenport L.B."/>
            <person name="Davies P."/>
            <person name="de Pablos B."/>
            <person name="Delcher A."/>
            <person name="Deng Z."/>
            <person name="Mays A.D."/>
            <person name="Dew I."/>
            <person name="Dietz S.M."/>
            <person name="Dodson K."/>
            <person name="Doup L.E."/>
            <person name="Downes M."/>
            <person name="Dugan-Rocha S."/>
            <person name="Dunkov B.C."/>
            <person name="Dunn P."/>
            <person name="Durbin K.J."/>
            <person name="Evangelista C.C."/>
            <person name="Ferraz C."/>
            <person name="Ferriera S."/>
            <person name="Fleischmann W."/>
            <person name="Fosler C."/>
            <person name="Gabrielian A.E."/>
            <person name="Garg N.S."/>
            <person name="Gelbart W.M."/>
            <person name="Glasser K."/>
            <person name="Glodek A."/>
            <person name="Gong F."/>
            <person name="Gorrell J.H."/>
            <person name="Gu Z."/>
            <person name="Guan P."/>
            <person name="Harris M."/>
            <person name="Harris N.L."/>
            <person name="Harvey D.A."/>
            <person name="Heiman T.J."/>
            <person name="Hernandez J.R."/>
            <person name="Houck J."/>
            <person name="Hostin D."/>
            <person name="Houston K.A."/>
            <person name="Howland T.J."/>
            <person name="Wei M.-H."/>
            <person name="Ibegwam C."/>
            <person name="Jalali M."/>
            <person name="Kalush F."/>
            <person name="Karpen G.H."/>
            <person name="Ke Z."/>
            <person name="Kennison J.A."/>
            <person name="Ketchum K.A."/>
            <person name="Kimmel B.E."/>
            <person name="Kodira C.D."/>
            <person name="Kraft C.L."/>
            <person name="Kravitz S."/>
            <person name="Kulp D."/>
            <person name="Lai Z."/>
            <person name="Lasko P."/>
            <person name="Lei Y."/>
            <person name="Levitsky A.A."/>
            <person name="Li J.H."/>
            <person name="Li Z."/>
            <person name="Liang Y."/>
            <person name="Lin X."/>
            <person name="Liu X."/>
            <person name="Mattei B."/>
            <person name="McIntosh T.C."/>
            <person name="McLeod M.P."/>
            <person name="McPherson D."/>
            <person name="Merkulov G."/>
            <person name="Milshina N.V."/>
            <person name="Mobarry C."/>
            <person name="Morris J."/>
            <person name="Moshrefi A."/>
            <person name="Mount S.M."/>
            <person name="Moy M."/>
            <person name="Murphy B."/>
            <person name="Murphy L."/>
            <person name="Muzny D.M."/>
            <person name="Nelson D.L."/>
            <person name="Nelson D.R."/>
            <person name="Nelson K.A."/>
            <person name="Nixon K."/>
            <person name="Nusskern D.R."/>
            <person name="Pacleb J.M."/>
            <person name="Palazzolo M."/>
            <person name="Pittman G.S."/>
            <person name="Pan S."/>
            <person name="Pollard J."/>
            <person name="Puri V."/>
            <person name="Reese M.G."/>
            <person name="Reinert K."/>
            <person name="Remington K."/>
            <person name="Saunders R.D.C."/>
            <person name="Scheeler F."/>
            <person name="Shen H."/>
            <person name="Shue B.C."/>
            <person name="Siden-Kiamos I."/>
            <person name="Simpson M."/>
            <person name="Skupski M.P."/>
            <person name="Smith T.J."/>
            <person name="Spier E."/>
            <person name="Spradling A.C."/>
            <person name="Stapleton M."/>
            <person name="Strong R."/>
            <person name="Sun E."/>
            <person name="Svirskas R."/>
            <person name="Tector C."/>
            <person name="Turner R."/>
            <person name="Venter E."/>
            <person name="Wang A.H."/>
            <person name="Wang X."/>
            <person name="Wang Z.-Y."/>
            <person name="Wassarman D.A."/>
            <person name="Weinstock G.M."/>
            <person name="Weissenbach J."/>
            <person name="Williams S.M."/>
            <person name="Woodage T."/>
            <person name="Worley K.C."/>
            <person name="Wu D."/>
            <person name="Yang S."/>
            <person name="Yao Q.A."/>
            <person name="Ye J."/>
            <person name="Yeh R.-F."/>
            <person name="Zaveri J.S."/>
            <person name="Zhan M."/>
            <person name="Zhang G."/>
            <person name="Zhao Q."/>
            <person name="Zheng L."/>
            <person name="Zheng X.H."/>
            <person name="Zhong F.N."/>
            <person name="Zhong W."/>
            <person name="Zhou X."/>
            <person name="Zhu S.C."/>
            <person name="Zhu X."/>
            <person name="Smith H.O."/>
            <person name="Gibbs R.A."/>
            <person name="Myers E.W."/>
            <person name="Rubin G.M."/>
            <person name="Venter J.C."/>
        </authorList>
    </citation>
    <scope>NUCLEOTIDE SEQUENCE [LARGE SCALE GENOMIC DNA]</scope>
    <source>
        <strain>Berkeley</strain>
    </source>
</reference>
<reference evidence="4 7" key="2">
    <citation type="journal article" date="2002" name="Genome Biol.">
        <title>Annotation of the Drosophila melanogaster euchromatic genome: a systematic review.</title>
        <authorList>
            <person name="Misra S."/>
            <person name="Crosby M.A."/>
            <person name="Mungall C.J."/>
            <person name="Matthews B.B."/>
            <person name="Campbell K.S."/>
            <person name="Hradecky P."/>
            <person name="Huang Y."/>
            <person name="Kaminker J.S."/>
            <person name="Millburn G.H."/>
            <person name="Prochnik S.E."/>
            <person name="Smith C.D."/>
            <person name="Tupy J.L."/>
            <person name="Whitfield E.J."/>
            <person name="Bayraktaroglu L."/>
            <person name="Berman B.P."/>
            <person name="Bettencourt B.R."/>
            <person name="Celniker S.E."/>
            <person name="de Grey A.D.N.J."/>
            <person name="Drysdale R.A."/>
            <person name="Harris N.L."/>
            <person name="Richter J."/>
            <person name="Russo S."/>
            <person name="Schroeder A.J."/>
            <person name="Shu S.Q."/>
            <person name="Stapleton M."/>
            <person name="Yamada C."/>
            <person name="Ashburner M."/>
            <person name="Gelbart W.M."/>
            <person name="Rubin G.M."/>
            <person name="Lewis S.E."/>
        </authorList>
    </citation>
    <scope>GENOME REANNOTATION</scope>
    <source>
        <strain>Berkeley</strain>
    </source>
</reference>
<reference evidence="4 5" key="3">
    <citation type="submission" date="2001-05" db="EMBL/GenBank/DDBJ databases">
        <title>Victoria, a putative secreted protein.</title>
        <authorList>
            <person name="Petersen U.-M."/>
            <person name="Mathey-Prevot B."/>
            <person name="Perrimon N."/>
        </authorList>
    </citation>
    <scope>NUCLEOTIDE SEQUENCE [MRNA] OF 2-134</scope>
</reference>
<reference evidence="4 6" key="4">
    <citation type="journal article" date="2001" name="Biochem. Biophys. Res. Commun.">
        <title>A family of Turandot-related genes in the humoral stress response of Drosophila.</title>
        <authorList>
            <person name="Ekengren S."/>
            <person name="Hultmark D."/>
        </authorList>
    </citation>
    <scope>NUCLEOTIDE SEQUENCE [MRNA] OF 4-134</scope>
    <scope>POSSIBLE FUNCTION</scope>
    <scope>DEVELOPMENTAL STAGE</scope>
    <scope>INDUCTION</scope>
    <source>
        <strain evidence="6">Canton-S</strain>
        <tissue evidence="2">Embryo</tissue>
    </source>
</reference>
<name>TOTE_DROME</name>
<gene>
    <name evidence="3" type="primary">TotE</name>
    <name evidence="8" type="synonym">Victoria</name>
    <name evidence="8" type="ORF">CG33117</name>
</gene>
<protein>
    <recommendedName>
        <fullName evidence="3">Protein Turandot E</fullName>
    </recommendedName>
    <alternativeName>
        <fullName evidence="8">Protein Victoria</fullName>
    </alternativeName>
</protein>
<feature type="signal peptide" evidence="1">
    <location>
        <begin position="1"/>
        <end position="38"/>
    </location>
</feature>
<feature type="chain" id="PRO_0000354988" description="Protein Turandot E">
    <location>
        <begin position="39"/>
        <end position="134"/>
    </location>
</feature>
<feature type="sequence conflict" description="In Ref. 4; AAK64520." evidence="4" ref="4">
    <original>Q</original>
    <variation>K</variation>
    <location>
        <position position="21"/>
    </location>
</feature>
<feature type="sequence conflict" description="In Ref. 4; AAK64520." evidence="4" ref="4">
    <location>
        <begin position="56"/>
        <end position="59"/>
    </location>
</feature>
<feature type="sequence conflict" description="In Ref. 4; AAK64520." evidence="4" ref="4">
    <original>T</original>
    <variation>A</variation>
    <location>
        <position position="71"/>
    </location>
</feature>
<feature type="sequence conflict" description="In Ref. 4; AAK64520." evidence="4" ref="4">
    <original>Y</original>
    <variation>C</variation>
    <location>
        <position position="76"/>
    </location>
</feature>
<feature type="sequence conflict" description="In Ref. 3; AAK58889." evidence="4" ref="3">
    <original>Q</original>
    <variation>E</variation>
    <location>
        <position position="88"/>
    </location>
</feature>
<comment type="function">
    <text evidence="2">A humoral factor that may play a role in stress tolerance.</text>
</comment>
<comment type="subcellular location">
    <subcellularLocation>
        <location evidence="2 4">Secreted</location>
    </subcellularLocation>
</comment>
<comment type="developmental stage">
    <text evidence="2">Expressed in the third larval instar and maintained through to early pupal development.</text>
</comment>
<comment type="induction">
    <text evidence="2">By a variety of stressful conditions including bacterial infection, heat shock and exposure to ultraviolet light.</text>
</comment>
<comment type="similarity">
    <text evidence="1">Belongs to the Turandot family.</text>
</comment>
<comment type="sequence caution" evidence="4">
    <conflict type="erroneous initiation">
        <sequence resource="EMBL-CDS" id="AAK58889"/>
    </conflict>
</comment>
<comment type="sequence caution" evidence="4">
    <conflict type="erroneous termination">
        <sequence resource="EMBL-CDS" id="AAK64520"/>
    </conflict>
    <text>Truncated C-terminus.</text>
</comment>
<sequence length="134" mass="14736">MSNTRTVHSSTSISKMNSALQISCLLVVLGCLLGSGHCQSEAEFAAKSREIAQVFGNPSVDKYTKARNLPTLIAFYEKYSSRLRLTPQERISINNAMRQYKAQRNQQVDGVSAQGGWLSDIIKTAISIIVKAVE</sequence>
<organism>
    <name type="scientific">Drosophila melanogaster</name>
    <name type="common">Fruit fly</name>
    <dbReference type="NCBI Taxonomy" id="7227"/>
    <lineage>
        <taxon>Eukaryota</taxon>
        <taxon>Metazoa</taxon>
        <taxon>Ecdysozoa</taxon>
        <taxon>Arthropoda</taxon>
        <taxon>Hexapoda</taxon>
        <taxon>Insecta</taxon>
        <taxon>Pterygota</taxon>
        <taxon>Neoptera</taxon>
        <taxon>Endopterygota</taxon>
        <taxon>Diptera</taxon>
        <taxon>Brachycera</taxon>
        <taxon>Muscomorpha</taxon>
        <taxon>Ephydroidea</taxon>
        <taxon>Drosophilidae</taxon>
        <taxon>Drosophila</taxon>
        <taxon>Sophophora</taxon>
    </lineage>
</organism>
<dbReference type="EMBL" id="AE014134">
    <property type="protein sequence ID" value="AAN11059.2"/>
    <property type="molecule type" value="Genomic_DNA"/>
</dbReference>
<dbReference type="EMBL" id="AY034880">
    <property type="protein sequence ID" value="AAK58889.1"/>
    <property type="status" value="ALT_INIT"/>
    <property type="molecule type" value="mRNA"/>
</dbReference>
<dbReference type="EMBL" id="AY035987">
    <property type="protein sequence ID" value="AAK64520.1"/>
    <property type="status" value="ALT_SEQ"/>
    <property type="molecule type" value="mRNA"/>
</dbReference>
<dbReference type="RefSeq" id="NP_788077.2">
    <property type="nucleotide sequence ID" value="NM_176063.3"/>
</dbReference>
<dbReference type="SMR" id="Q8INV7"/>
<dbReference type="BioGRID" id="61248">
    <property type="interactions" value="1"/>
</dbReference>
<dbReference type="FunCoup" id="Q8INV7">
    <property type="interactions" value="38"/>
</dbReference>
<dbReference type="IntAct" id="Q8INV7">
    <property type="interactions" value="2"/>
</dbReference>
<dbReference type="STRING" id="7227.FBpp0080844"/>
<dbReference type="PaxDb" id="7227-FBpp0080844"/>
<dbReference type="DNASU" id="35275"/>
<dbReference type="EnsemblMetazoa" id="FBtr0081309">
    <property type="protein sequence ID" value="FBpp0080844"/>
    <property type="gene ID" value="FBgn0053117"/>
</dbReference>
<dbReference type="GeneID" id="35275"/>
<dbReference type="KEGG" id="dme:Dmel_CG33117"/>
<dbReference type="UCSC" id="CG33117-RA">
    <property type="organism name" value="d. melanogaster"/>
</dbReference>
<dbReference type="AGR" id="FB:FBgn0053117"/>
<dbReference type="CTD" id="35275"/>
<dbReference type="FlyBase" id="FBgn0053117">
    <property type="gene designation" value="TotE"/>
</dbReference>
<dbReference type="VEuPathDB" id="VectorBase:FBgn0053117"/>
<dbReference type="GeneTree" id="ENSGT00540000073707"/>
<dbReference type="HOGENOM" id="CLU_158853_0_0_1"/>
<dbReference type="InParanoid" id="Q8INV7"/>
<dbReference type="OMA" id="GHCQSEA"/>
<dbReference type="OrthoDB" id="7857971at2759"/>
<dbReference type="PhylomeDB" id="Q8INV7"/>
<dbReference type="BioGRID-ORCS" id="35275">
    <property type="hits" value="0 hits in 1 CRISPR screen"/>
</dbReference>
<dbReference type="GenomeRNAi" id="35275"/>
<dbReference type="PRO" id="PR:Q8INV7"/>
<dbReference type="Proteomes" id="UP000000803">
    <property type="component" value="Chromosome 2L"/>
</dbReference>
<dbReference type="Bgee" id="FBgn0053117">
    <property type="expression patterns" value="Expressed in arthropod fat body and 5 other cell types or tissues"/>
</dbReference>
<dbReference type="ExpressionAtlas" id="Q8INV7">
    <property type="expression patterns" value="baseline and differential"/>
</dbReference>
<dbReference type="GO" id="GO:0005576">
    <property type="term" value="C:extracellular region"/>
    <property type="evidence" value="ECO:0000255"/>
    <property type="project" value="FlyBase"/>
</dbReference>
<dbReference type="GO" id="GO:0005615">
    <property type="term" value="C:extracellular space"/>
    <property type="evidence" value="ECO:0000314"/>
    <property type="project" value="UniProtKB"/>
</dbReference>
<dbReference type="GO" id="GO:0034605">
    <property type="term" value="P:cellular response to heat"/>
    <property type="evidence" value="ECO:0000270"/>
    <property type="project" value="FlyBase"/>
</dbReference>
<dbReference type="GO" id="GO:0034644">
    <property type="term" value="P:cellular response to UV"/>
    <property type="evidence" value="ECO:0000270"/>
    <property type="project" value="FlyBase"/>
</dbReference>
<dbReference type="GO" id="GO:0045087">
    <property type="term" value="P:innate immune response"/>
    <property type="evidence" value="ECO:0007669"/>
    <property type="project" value="UniProtKB-KW"/>
</dbReference>
<dbReference type="GO" id="GO:0009617">
    <property type="term" value="P:response to bacterium"/>
    <property type="evidence" value="ECO:0000270"/>
    <property type="project" value="FlyBase"/>
</dbReference>
<dbReference type="GO" id="GO:0009408">
    <property type="term" value="P:response to heat"/>
    <property type="evidence" value="ECO:0000314"/>
    <property type="project" value="UniProtKB"/>
</dbReference>
<dbReference type="InterPro" id="IPR010825">
    <property type="entry name" value="Turandot"/>
</dbReference>
<dbReference type="Pfam" id="PF07240">
    <property type="entry name" value="Turandot"/>
    <property type="match status" value="1"/>
</dbReference>
<proteinExistence type="evidence at transcript level"/>
<accession>Q8INV7</accession>
<accession>Q962E1</accession>
<accession>Q962F4</accession>